<evidence type="ECO:0000255" key="1">
    <source>
        <dbReference type="HAMAP-Rule" id="MF_00176"/>
    </source>
</evidence>
<feature type="chain" id="PRO_0000122150" description="Serine--tRNA ligase">
    <location>
        <begin position="1"/>
        <end position="417"/>
    </location>
</feature>
<feature type="binding site" evidence="1">
    <location>
        <begin position="226"/>
        <end position="228"/>
    </location>
    <ligand>
        <name>L-serine</name>
        <dbReference type="ChEBI" id="CHEBI:33384"/>
    </ligand>
</feature>
<feature type="binding site" evidence="1">
    <location>
        <begin position="257"/>
        <end position="259"/>
    </location>
    <ligand>
        <name>ATP</name>
        <dbReference type="ChEBI" id="CHEBI:30616"/>
    </ligand>
</feature>
<feature type="binding site" evidence="1">
    <location>
        <position position="273"/>
    </location>
    <ligand>
        <name>ATP</name>
        <dbReference type="ChEBI" id="CHEBI:30616"/>
    </ligand>
</feature>
<feature type="binding site" evidence="1">
    <location>
        <position position="280"/>
    </location>
    <ligand>
        <name>L-serine</name>
        <dbReference type="ChEBI" id="CHEBI:33384"/>
    </ligand>
</feature>
<feature type="binding site" evidence="1">
    <location>
        <begin position="344"/>
        <end position="347"/>
    </location>
    <ligand>
        <name>ATP</name>
        <dbReference type="ChEBI" id="CHEBI:30616"/>
    </ligand>
</feature>
<feature type="binding site" evidence="1">
    <location>
        <position position="379"/>
    </location>
    <ligand>
        <name>L-serine</name>
        <dbReference type="ChEBI" id="CHEBI:33384"/>
    </ligand>
</feature>
<accession>Q83HA1</accession>
<sequence length="417" mass="46858">MIDPEILVNTPDIVRLSQKKRGESQSIVEDALIARRNLRIAINNFETLRAEQNVLSKKIAGSEDSDRPELMRVANLLAERVKNAREEQEKANSEWKKLLFEIPNIVSSEAPYGVEDKCAVMKTVGDIPEFDFEPADHLQLGEQLDAIDVSRGVKVSGTRFYFLKGWGARLELAVMNLALDLALKSGLTLLITPTLVKPEIMLGTGFLGRHEGEVYRLPSGYYLTGTSEVAIAGYHSDEILDISSGPIRYAGWSSCYRREAGSHGRDTRGIMRVHQFSKLEMFSYVHPQQSTRELEHIVSMQEKMLNLLEIPYRVSDIAAEELGTSASRKYDLEAWIPSQNTWREVTSASDCTTFQARRLNVRYRDESGRTGYVATLNGTLATTRFLVAILENHQTSNGSIRVPEALRPLLGQDVIER</sequence>
<proteinExistence type="inferred from homology"/>
<organism>
    <name type="scientific">Tropheryma whipplei (strain TW08/27)</name>
    <name type="common">Whipple's bacillus</name>
    <dbReference type="NCBI Taxonomy" id="218496"/>
    <lineage>
        <taxon>Bacteria</taxon>
        <taxon>Bacillati</taxon>
        <taxon>Actinomycetota</taxon>
        <taxon>Actinomycetes</taxon>
        <taxon>Micrococcales</taxon>
        <taxon>Tropherymataceae</taxon>
        <taxon>Tropheryma</taxon>
    </lineage>
</organism>
<protein>
    <recommendedName>
        <fullName evidence="1">Serine--tRNA ligase</fullName>
        <ecNumber evidence="1">6.1.1.11</ecNumber>
    </recommendedName>
    <alternativeName>
        <fullName evidence="1">Seryl-tRNA synthetase</fullName>
        <shortName evidence="1">SerRS</shortName>
    </alternativeName>
    <alternativeName>
        <fullName evidence="1">Seryl-tRNA(Ser/Sec) synthetase</fullName>
    </alternativeName>
</protein>
<gene>
    <name evidence="1" type="primary">serS</name>
    <name type="ordered locus">TW740</name>
</gene>
<keyword id="KW-0030">Aminoacyl-tRNA synthetase</keyword>
<keyword id="KW-0067">ATP-binding</keyword>
<keyword id="KW-0963">Cytoplasm</keyword>
<keyword id="KW-0436">Ligase</keyword>
<keyword id="KW-0547">Nucleotide-binding</keyword>
<keyword id="KW-0648">Protein biosynthesis</keyword>
<reference key="1">
    <citation type="journal article" date="2003" name="Lancet">
        <title>Sequencing and analysis of the genome of the Whipple's disease bacterium Tropheryma whipplei.</title>
        <authorList>
            <person name="Bentley S.D."/>
            <person name="Maiwald M."/>
            <person name="Murphy L.D."/>
            <person name="Pallen M.J."/>
            <person name="Yeats C.A."/>
            <person name="Dover L.G."/>
            <person name="Norbertczak H.T."/>
            <person name="Besra G.S."/>
            <person name="Quail M.A."/>
            <person name="Harris D.E."/>
            <person name="von Herbay A."/>
            <person name="Goble A."/>
            <person name="Rutter S."/>
            <person name="Squares R."/>
            <person name="Squares S."/>
            <person name="Barrell B.G."/>
            <person name="Parkhill J."/>
            <person name="Relman D.A."/>
        </authorList>
    </citation>
    <scope>NUCLEOTIDE SEQUENCE [LARGE SCALE GENOMIC DNA]</scope>
    <source>
        <strain>TW08/27</strain>
    </source>
</reference>
<dbReference type="EC" id="6.1.1.11" evidence="1"/>
<dbReference type="EMBL" id="BX251412">
    <property type="protein sequence ID" value="CAD67399.1"/>
    <property type="molecule type" value="Genomic_DNA"/>
</dbReference>
<dbReference type="RefSeq" id="WP_011096677.1">
    <property type="nucleotide sequence ID" value="NC_004551.1"/>
</dbReference>
<dbReference type="SMR" id="Q83HA1"/>
<dbReference type="GeneID" id="67388519"/>
<dbReference type="KEGG" id="tws:TW740"/>
<dbReference type="HOGENOM" id="CLU_023797_0_1_11"/>
<dbReference type="UniPathway" id="UPA00906">
    <property type="reaction ID" value="UER00895"/>
</dbReference>
<dbReference type="GO" id="GO:0005737">
    <property type="term" value="C:cytoplasm"/>
    <property type="evidence" value="ECO:0007669"/>
    <property type="project" value="UniProtKB-SubCell"/>
</dbReference>
<dbReference type="GO" id="GO:0005524">
    <property type="term" value="F:ATP binding"/>
    <property type="evidence" value="ECO:0007669"/>
    <property type="project" value="UniProtKB-UniRule"/>
</dbReference>
<dbReference type="GO" id="GO:0004828">
    <property type="term" value="F:serine-tRNA ligase activity"/>
    <property type="evidence" value="ECO:0007669"/>
    <property type="project" value="UniProtKB-UniRule"/>
</dbReference>
<dbReference type="GO" id="GO:0016260">
    <property type="term" value="P:selenocysteine biosynthetic process"/>
    <property type="evidence" value="ECO:0007669"/>
    <property type="project" value="UniProtKB-UniRule"/>
</dbReference>
<dbReference type="GO" id="GO:0006434">
    <property type="term" value="P:seryl-tRNA aminoacylation"/>
    <property type="evidence" value="ECO:0007669"/>
    <property type="project" value="UniProtKB-UniRule"/>
</dbReference>
<dbReference type="CDD" id="cd00770">
    <property type="entry name" value="SerRS_core"/>
    <property type="match status" value="1"/>
</dbReference>
<dbReference type="Gene3D" id="3.30.930.10">
    <property type="entry name" value="Bira Bifunctional Protein, Domain 2"/>
    <property type="match status" value="1"/>
</dbReference>
<dbReference type="Gene3D" id="1.10.287.40">
    <property type="entry name" value="Serine-tRNA synthetase, tRNA binding domain"/>
    <property type="match status" value="1"/>
</dbReference>
<dbReference type="HAMAP" id="MF_00176">
    <property type="entry name" value="Ser_tRNA_synth_type1"/>
    <property type="match status" value="1"/>
</dbReference>
<dbReference type="InterPro" id="IPR002314">
    <property type="entry name" value="aa-tRNA-synt_IIb"/>
</dbReference>
<dbReference type="InterPro" id="IPR006195">
    <property type="entry name" value="aa-tRNA-synth_II"/>
</dbReference>
<dbReference type="InterPro" id="IPR045864">
    <property type="entry name" value="aa-tRNA-synth_II/BPL/LPL"/>
</dbReference>
<dbReference type="InterPro" id="IPR002317">
    <property type="entry name" value="Ser-tRNA-ligase_type_1"/>
</dbReference>
<dbReference type="InterPro" id="IPR015866">
    <property type="entry name" value="Ser-tRNA-synth_1_N"/>
</dbReference>
<dbReference type="InterPro" id="IPR042103">
    <property type="entry name" value="SerRS_1_N_sf"/>
</dbReference>
<dbReference type="InterPro" id="IPR033729">
    <property type="entry name" value="SerRS_core"/>
</dbReference>
<dbReference type="InterPro" id="IPR010978">
    <property type="entry name" value="tRNA-bd_arm"/>
</dbReference>
<dbReference type="NCBIfam" id="TIGR00414">
    <property type="entry name" value="serS"/>
    <property type="match status" value="1"/>
</dbReference>
<dbReference type="PANTHER" id="PTHR11778">
    <property type="entry name" value="SERYL-TRNA SYNTHETASE"/>
    <property type="match status" value="1"/>
</dbReference>
<dbReference type="Pfam" id="PF02403">
    <property type="entry name" value="Seryl_tRNA_N"/>
    <property type="match status" value="1"/>
</dbReference>
<dbReference type="Pfam" id="PF00587">
    <property type="entry name" value="tRNA-synt_2b"/>
    <property type="match status" value="1"/>
</dbReference>
<dbReference type="PIRSF" id="PIRSF001529">
    <property type="entry name" value="Ser-tRNA-synth_IIa"/>
    <property type="match status" value="1"/>
</dbReference>
<dbReference type="PRINTS" id="PR00981">
    <property type="entry name" value="TRNASYNTHSER"/>
</dbReference>
<dbReference type="SUPFAM" id="SSF55681">
    <property type="entry name" value="Class II aaRS and biotin synthetases"/>
    <property type="match status" value="1"/>
</dbReference>
<dbReference type="SUPFAM" id="SSF46589">
    <property type="entry name" value="tRNA-binding arm"/>
    <property type="match status" value="1"/>
</dbReference>
<dbReference type="PROSITE" id="PS50862">
    <property type="entry name" value="AA_TRNA_LIGASE_II"/>
    <property type="match status" value="1"/>
</dbReference>
<comment type="function">
    <text evidence="1">Catalyzes the attachment of serine to tRNA(Ser). Is also able to aminoacylate tRNA(Sec) with serine, to form the misacylated tRNA L-seryl-tRNA(Sec), which will be further converted into selenocysteinyl-tRNA(Sec).</text>
</comment>
<comment type="catalytic activity">
    <reaction evidence="1">
        <text>tRNA(Ser) + L-serine + ATP = L-seryl-tRNA(Ser) + AMP + diphosphate + H(+)</text>
        <dbReference type="Rhea" id="RHEA:12292"/>
        <dbReference type="Rhea" id="RHEA-COMP:9669"/>
        <dbReference type="Rhea" id="RHEA-COMP:9703"/>
        <dbReference type="ChEBI" id="CHEBI:15378"/>
        <dbReference type="ChEBI" id="CHEBI:30616"/>
        <dbReference type="ChEBI" id="CHEBI:33019"/>
        <dbReference type="ChEBI" id="CHEBI:33384"/>
        <dbReference type="ChEBI" id="CHEBI:78442"/>
        <dbReference type="ChEBI" id="CHEBI:78533"/>
        <dbReference type="ChEBI" id="CHEBI:456215"/>
        <dbReference type="EC" id="6.1.1.11"/>
    </reaction>
</comment>
<comment type="catalytic activity">
    <reaction evidence="1">
        <text>tRNA(Sec) + L-serine + ATP = L-seryl-tRNA(Sec) + AMP + diphosphate + H(+)</text>
        <dbReference type="Rhea" id="RHEA:42580"/>
        <dbReference type="Rhea" id="RHEA-COMP:9742"/>
        <dbReference type="Rhea" id="RHEA-COMP:10128"/>
        <dbReference type="ChEBI" id="CHEBI:15378"/>
        <dbReference type="ChEBI" id="CHEBI:30616"/>
        <dbReference type="ChEBI" id="CHEBI:33019"/>
        <dbReference type="ChEBI" id="CHEBI:33384"/>
        <dbReference type="ChEBI" id="CHEBI:78442"/>
        <dbReference type="ChEBI" id="CHEBI:78533"/>
        <dbReference type="ChEBI" id="CHEBI:456215"/>
        <dbReference type="EC" id="6.1.1.11"/>
    </reaction>
</comment>
<comment type="pathway">
    <text evidence="1">Aminoacyl-tRNA biosynthesis; selenocysteinyl-tRNA(Sec) biosynthesis; L-seryl-tRNA(Sec) from L-serine and tRNA(Sec): step 1/1.</text>
</comment>
<comment type="subunit">
    <text evidence="1">Homodimer. The tRNA molecule binds across the dimer.</text>
</comment>
<comment type="subcellular location">
    <subcellularLocation>
        <location evidence="1">Cytoplasm</location>
    </subcellularLocation>
</comment>
<comment type="domain">
    <text evidence="1">Consists of two distinct domains, a catalytic core and a N-terminal extension that is involved in tRNA binding.</text>
</comment>
<comment type="similarity">
    <text evidence="1">Belongs to the class-II aminoacyl-tRNA synthetase family. Type-1 seryl-tRNA synthetase subfamily.</text>
</comment>
<name>SYS_TROW8</name>